<proteinExistence type="evidence at protein level"/>
<keyword id="KW-0007">Acetylation</keyword>
<keyword id="KW-0966">Cell projection</keyword>
<keyword id="KW-0969">Cilium</keyword>
<keyword id="KW-0968">Cytoplasmic vesicle</keyword>
<keyword id="KW-0903">Direct protein sequencing</keyword>
<keyword id="KW-1015">Disulfide bond</keyword>
<keyword id="KW-0274">FAD</keyword>
<keyword id="KW-0282">Flagellum</keyword>
<keyword id="KW-0285">Flavoprotein</keyword>
<keyword id="KW-0496">Mitochondrion</keyword>
<keyword id="KW-0520">NAD</keyword>
<keyword id="KW-0539">Nucleus</keyword>
<keyword id="KW-0560">Oxidoreductase</keyword>
<keyword id="KW-0597">Phosphoprotein</keyword>
<keyword id="KW-0676">Redox-active center</keyword>
<keyword id="KW-1185">Reference proteome</keyword>
<keyword id="KW-0809">Transit peptide</keyword>
<gene>
    <name type="primary">DLD</name>
    <name type="synonym">LAD</name>
</gene>
<feature type="transit peptide" description="Mitochondrion" evidence="7">
    <location>
        <begin position="1"/>
        <end position="35"/>
    </location>
</feature>
<feature type="chain" id="PRO_0000030298" description="Dihydrolipoyl dehydrogenase, mitochondrial">
    <location>
        <begin position="36"/>
        <end position="509"/>
    </location>
</feature>
<feature type="active site" description="Proton acceptor" evidence="3">
    <location>
        <position position="487"/>
    </location>
</feature>
<feature type="binding site" evidence="2">
    <location>
        <begin position="71"/>
        <end position="80"/>
    </location>
    <ligand>
        <name>FAD</name>
        <dbReference type="ChEBI" id="CHEBI:57692"/>
    </ligand>
</feature>
<feature type="binding site" evidence="2">
    <location>
        <position position="89"/>
    </location>
    <ligand>
        <name>FAD</name>
        <dbReference type="ChEBI" id="CHEBI:57692"/>
    </ligand>
</feature>
<feature type="binding site" evidence="2">
    <location>
        <position position="154"/>
    </location>
    <ligand>
        <name>FAD</name>
        <dbReference type="ChEBI" id="CHEBI:57692"/>
    </ligand>
</feature>
<feature type="binding site" evidence="2">
    <location>
        <begin position="183"/>
        <end position="185"/>
    </location>
    <ligand>
        <name>FAD</name>
        <dbReference type="ChEBI" id="CHEBI:57692"/>
    </ligand>
</feature>
<feature type="binding site" evidence="2">
    <location>
        <begin position="220"/>
        <end position="227"/>
    </location>
    <ligand>
        <name>NAD(+)</name>
        <dbReference type="ChEBI" id="CHEBI:57540"/>
    </ligand>
</feature>
<feature type="binding site" evidence="2">
    <location>
        <position position="243"/>
    </location>
    <ligand>
        <name>NAD(+)</name>
        <dbReference type="ChEBI" id="CHEBI:57540"/>
    </ligand>
</feature>
<feature type="binding site" evidence="2">
    <location>
        <position position="278"/>
    </location>
    <ligand>
        <name>NAD(+)</name>
        <dbReference type="ChEBI" id="CHEBI:57540"/>
    </ligand>
</feature>
<feature type="binding site" evidence="2">
    <location>
        <position position="314"/>
    </location>
    <ligand>
        <name>NAD(+)</name>
        <dbReference type="ChEBI" id="CHEBI:57540"/>
    </ligand>
</feature>
<feature type="binding site" evidence="2">
    <location>
        <position position="355"/>
    </location>
    <ligand>
        <name>FAD</name>
        <dbReference type="ChEBI" id="CHEBI:57692"/>
    </ligand>
</feature>
<feature type="binding site" evidence="2">
    <location>
        <begin position="361"/>
        <end position="364"/>
    </location>
    <ligand>
        <name>FAD</name>
        <dbReference type="ChEBI" id="CHEBI:57692"/>
    </ligand>
</feature>
<feature type="site" description="Important for interaction with PDHX and activity of pyruvate dehydrogenase complex" evidence="2">
    <location>
        <position position="448"/>
    </location>
</feature>
<feature type="site" description="Important for interaction with PDHX and activity of pyruvate dehydrogenase complex" evidence="2">
    <location>
        <position position="473"/>
    </location>
</feature>
<feature type="modified residue" description="N6-acetyllysine; alternate" evidence="1">
    <location>
        <position position="66"/>
    </location>
</feature>
<feature type="modified residue" description="N6-succinyllysine; alternate" evidence="1">
    <location>
        <position position="66"/>
    </location>
</feature>
<feature type="modified residue" description="N6-acetyllysine; alternate" evidence="1">
    <location>
        <position position="104"/>
    </location>
</feature>
<feature type="modified residue" description="N6-succinyllysine; alternate" evidence="1">
    <location>
        <position position="104"/>
    </location>
</feature>
<feature type="modified residue" description="N6-acetyllysine; alternate" evidence="1">
    <location>
        <position position="122"/>
    </location>
</feature>
<feature type="modified residue" description="N6-succinyllysine; alternate" evidence="1">
    <location>
        <position position="122"/>
    </location>
</feature>
<feature type="modified residue" description="N6-acetyllysine; alternate" evidence="1">
    <location>
        <position position="132"/>
    </location>
</feature>
<feature type="modified residue" description="N6-succinyllysine; alternate" evidence="1">
    <location>
        <position position="132"/>
    </location>
</feature>
<feature type="modified residue" description="N6-acetyllysine; alternate" evidence="2">
    <location>
        <position position="143"/>
    </location>
</feature>
<feature type="modified residue" description="N6-succinyllysine; alternate" evidence="1">
    <location>
        <position position="143"/>
    </location>
</feature>
<feature type="modified residue" description="N6-succinyllysine" evidence="1">
    <location>
        <position position="159"/>
    </location>
</feature>
<feature type="modified residue" description="N6-succinyllysine" evidence="1">
    <location>
        <position position="166"/>
    </location>
</feature>
<feature type="modified residue" description="N6-succinyllysine" evidence="1">
    <location>
        <position position="273"/>
    </location>
</feature>
<feature type="modified residue" description="N6-succinyllysine" evidence="1">
    <location>
        <position position="277"/>
    </location>
</feature>
<feature type="modified residue" description="Phosphoserine" evidence="1">
    <location>
        <position position="285"/>
    </location>
</feature>
<feature type="modified residue" description="Phosphoserine" evidence="4">
    <location>
        <position position="297"/>
    </location>
</feature>
<feature type="modified residue" description="N6-acetyllysine" evidence="1">
    <location>
        <position position="346"/>
    </location>
</feature>
<feature type="modified residue" description="N6-acetyllysine; alternate" evidence="2">
    <location>
        <position position="410"/>
    </location>
</feature>
<feature type="modified residue" description="N6-succinyllysine; alternate" evidence="1">
    <location>
        <position position="410"/>
    </location>
</feature>
<feature type="modified residue" description="N6-acetyllysine" evidence="2">
    <location>
        <position position="417"/>
    </location>
</feature>
<feature type="modified residue" description="N6-acetyllysine" evidence="1">
    <location>
        <position position="420"/>
    </location>
</feature>
<feature type="modified residue" description="N6-succinyllysine" evidence="1">
    <location>
        <position position="430"/>
    </location>
</feature>
<feature type="modified residue" description="Phosphoserine" evidence="2">
    <location>
        <position position="502"/>
    </location>
</feature>
<feature type="modified residue" description="N6-acetyllysine; alternate" evidence="1">
    <location>
        <position position="505"/>
    </location>
</feature>
<feature type="modified residue" description="N6-succinyllysine; alternate" evidence="1">
    <location>
        <position position="505"/>
    </location>
</feature>
<feature type="disulfide bond" description="Redox-active" evidence="3">
    <location>
        <begin position="80"/>
        <end position="85"/>
    </location>
</feature>
<feature type="sequence conflict" description="In Ref. 2; AA sequence." evidence="8" ref="2">
    <original>SHY</original>
    <variation>GHA</variation>
    <location>
        <begin position="95"/>
        <end position="97"/>
    </location>
</feature>
<feature type="sequence conflict" description="In Ref. 2; AA sequence." evidence="8" ref="2">
    <original>K</original>
    <variation>R</variation>
    <location>
        <position position="346"/>
    </location>
</feature>
<feature type="sequence conflict" description="In Ref. 2; AA sequence." evidence="8" ref="2">
    <original>Y</original>
    <variation>A</variation>
    <location>
        <position position="351"/>
    </location>
</feature>
<evidence type="ECO:0000250" key="1">
    <source>
        <dbReference type="UniProtKB" id="O08749"/>
    </source>
</evidence>
<evidence type="ECO:0000250" key="2">
    <source>
        <dbReference type="UniProtKB" id="P09622"/>
    </source>
</evidence>
<evidence type="ECO:0000250" key="3">
    <source>
        <dbReference type="UniProtKB" id="P09624"/>
    </source>
</evidence>
<evidence type="ECO:0000250" key="4">
    <source>
        <dbReference type="UniProtKB" id="Q6P6R2"/>
    </source>
</evidence>
<evidence type="ECO:0000250" key="5">
    <source>
        <dbReference type="UniProtKB" id="Q811C4"/>
    </source>
</evidence>
<evidence type="ECO:0000269" key="6">
    <source>
    </source>
</evidence>
<evidence type="ECO:0000269" key="7">
    <source>
    </source>
</evidence>
<evidence type="ECO:0000305" key="8"/>
<evidence type="ECO:0000305" key="9">
    <source>
    </source>
</evidence>
<accession>P09623</accession>
<comment type="function">
    <text evidence="2 5 6">Lipoamide dehydrogenase is a component of the glycine cleavage system as well as an E3 component of three alpha-ketoacid dehydrogenase complexes (pyruvate-, alpha-ketoglutarate-, and branched-chain amino acid-dehydrogenase complex) (By similarity). The 2-oxoglutarate dehydrogenase complex is mainly active in the mitochondrion (By similarity). A fraction of the 2-oxoglutarate dehydrogenase complex also localizes in the nucleus and is required for lysine succinylation of histones: associates with KAT2A on chromatin and provides succinyl-CoA to histone succinyltransferase KAT2A (By similarity). In monomeric form may have additional moonlighting function as serine protease (PubMed:17404228). Involved in the hyperactivation of spermatazoa during capacitation and in the spermatazoal acrosome reaction (By similarity).</text>
</comment>
<comment type="catalytic activity">
    <reaction evidence="2">
        <text>N(6)-[(R)-dihydrolipoyl]-L-lysyl-[protein] + NAD(+) = N(6)-[(R)-lipoyl]-L-lysyl-[protein] + NADH + H(+)</text>
        <dbReference type="Rhea" id="RHEA:15045"/>
        <dbReference type="Rhea" id="RHEA-COMP:10474"/>
        <dbReference type="Rhea" id="RHEA-COMP:10475"/>
        <dbReference type="ChEBI" id="CHEBI:15378"/>
        <dbReference type="ChEBI" id="CHEBI:57540"/>
        <dbReference type="ChEBI" id="CHEBI:57945"/>
        <dbReference type="ChEBI" id="CHEBI:83099"/>
        <dbReference type="ChEBI" id="CHEBI:83100"/>
        <dbReference type="EC" id="1.8.1.4"/>
    </reaction>
</comment>
<comment type="cofactor">
    <cofactor evidence="2">
        <name>FAD</name>
        <dbReference type="ChEBI" id="CHEBI:57692"/>
    </cofactor>
    <text evidence="2">Binds 1 FAD per subunit.</text>
</comment>
<comment type="subunit">
    <text evidence="1 2">Homodimer. Part of the multimeric pyruvate dehydrogenase complex that contains multiple copies of pyruvate dehydrogenase (subunits PDHA (PDHA1 or PDHA2) and PDHB, E1), dihydrolipoamide acetyltransferase (DLAT, E2) and lipoamide dehydrogenase (DLD, E3). These subunits are bound to an inner core composed of about 48 DLAT and 12 PDHX molecules (by non covalent bonds). The 2-oxoglutarate dehydrogenase complex is composed of OGDH (2-oxoglutarate dehydrogenase; E1), DLST (dihydrolipoamide succinyltransferase; E2), DLD (dihydrolipoamide dehydrogenase; E3) and the assembly factor KGD4 (By similarity). It contains multiple copies of the three enzymatic components (E1, E2 and E3). In the nucleus, the 2-oxoglutarate dehydrogenase complex associates with KAT2A. Interacts with PDHX.</text>
</comment>
<comment type="subcellular location">
    <subcellularLocation>
        <location evidence="9">Mitochondrion matrix</location>
    </subcellularLocation>
    <subcellularLocation>
        <location evidence="2">Nucleus</location>
    </subcellularLocation>
    <subcellularLocation>
        <location evidence="5">Cell projection</location>
        <location evidence="5">Cilium</location>
        <location evidence="5">Flagellum</location>
    </subcellularLocation>
    <subcellularLocation>
        <location evidence="2">Cytoplasmic vesicle</location>
        <location evidence="2">Secretory vesicle</location>
        <location evidence="2">Acrosome</location>
    </subcellularLocation>
    <text evidence="2">Mainly localizes in the mitochondrion. A small fraction localizes to the nucleus, where the 2-oxoglutarate dehydrogenase complex is required for histone succinylation.</text>
</comment>
<comment type="tissue specificity">
    <text evidence="6">Expressed in heart (at protein level).</text>
</comment>
<comment type="PTM">
    <text evidence="5">Tyrosine phosphorylated.</text>
</comment>
<comment type="miscellaneous">
    <text evidence="3">The active site is a redox-active disulfide bond.</text>
</comment>
<comment type="similarity">
    <text evidence="8">Belongs to the class-I pyridine nucleotide-disulfide oxidoreductase family.</text>
</comment>
<dbReference type="EC" id="1.8.1.4" evidence="2"/>
<dbReference type="EMBL" id="J03489">
    <property type="protein sequence ID" value="AAA31069.1"/>
    <property type="molecule type" value="mRNA"/>
</dbReference>
<dbReference type="PIR" id="A28448">
    <property type="entry name" value="DEPGLP"/>
</dbReference>
<dbReference type="RefSeq" id="NP_999227.1">
    <property type="nucleotide sequence ID" value="NM_214062.1"/>
</dbReference>
<dbReference type="SMR" id="P09623"/>
<dbReference type="FunCoup" id="P09623">
    <property type="interactions" value="1336"/>
</dbReference>
<dbReference type="STRING" id="9823.ENSSSCP00000061323"/>
<dbReference type="BindingDB" id="P09623"/>
<dbReference type="ChEMBL" id="CHEMBL4061"/>
<dbReference type="PaxDb" id="9823-ENSSSCP00000016374"/>
<dbReference type="PeptideAtlas" id="P09623"/>
<dbReference type="GeneID" id="397129"/>
<dbReference type="KEGG" id="ssc:397129"/>
<dbReference type="CTD" id="1738"/>
<dbReference type="eggNOG" id="KOG1335">
    <property type="taxonomic scope" value="Eukaryota"/>
</dbReference>
<dbReference type="InParanoid" id="P09623"/>
<dbReference type="OrthoDB" id="361797at2759"/>
<dbReference type="BRENDA" id="1.8.1.4">
    <property type="organism ID" value="6170"/>
</dbReference>
<dbReference type="SABIO-RK" id="P09623"/>
<dbReference type="PRO" id="PR:P09623"/>
<dbReference type="Proteomes" id="UP000008227">
    <property type="component" value="Unplaced"/>
</dbReference>
<dbReference type="Proteomes" id="UP000314985">
    <property type="component" value="Unplaced"/>
</dbReference>
<dbReference type="Proteomes" id="UP000694570">
    <property type="component" value="Unplaced"/>
</dbReference>
<dbReference type="Proteomes" id="UP000694571">
    <property type="component" value="Unplaced"/>
</dbReference>
<dbReference type="Proteomes" id="UP000694720">
    <property type="component" value="Unplaced"/>
</dbReference>
<dbReference type="Proteomes" id="UP000694722">
    <property type="component" value="Unplaced"/>
</dbReference>
<dbReference type="Proteomes" id="UP000694723">
    <property type="component" value="Unplaced"/>
</dbReference>
<dbReference type="Proteomes" id="UP000694724">
    <property type="component" value="Unplaced"/>
</dbReference>
<dbReference type="Proteomes" id="UP000694725">
    <property type="component" value="Unplaced"/>
</dbReference>
<dbReference type="Proteomes" id="UP000694726">
    <property type="component" value="Unplaced"/>
</dbReference>
<dbReference type="Proteomes" id="UP000694727">
    <property type="component" value="Unplaced"/>
</dbReference>
<dbReference type="Proteomes" id="UP000694728">
    <property type="component" value="Unplaced"/>
</dbReference>
<dbReference type="GO" id="GO:0001669">
    <property type="term" value="C:acrosomal vesicle"/>
    <property type="evidence" value="ECO:0007669"/>
    <property type="project" value="UniProtKB-SubCell"/>
</dbReference>
<dbReference type="GO" id="GO:0005759">
    <property type="term" value="C:mitochondrial matrix"/>
    <property type="evidence" value="ECO:0007669"/>
    <property type="project" value="UniProtKB-SubCell"/>
</dbReference>
<dbReference type="GO" id="GO:0005739">
    <property type="term" value="C:mitochondrion"/>
    <property type="evidence" value="ECO:0000250"/>
    <property type="project" value="UniProtKB"/>
</dbReference>
<dbReference type="GO" id="GO:0031514">
    <property type="term" value="C:motile cilium"/>
    <property type="evidence" value="ECO:0007669"/>
    <property type="project" value="UniProtKB-SubCell"/>
</dbReference>
<dbReference type="GO" id="GO:0005634">
    <property type="term" value="C:nucleus"/>
    <property type="evidence" value="ECO:0000250"/>
    <property type="project" value="UniProtKB"/>
</dbReference>
<dbReference type="GO" id="GO:0045252">
    <property type="term" value="C:oxoglutarate dehydrogenase complex"/>
    <property type="evidence" value="ECO:0000250"/>
    <property type="project" value="UniProtKB"/>
</dbReference>
<dbReference type="GO" id="GO:0004148">
    <property type="term" value="F:dihydrolipoyl dehydrogenase (NADH) activity"/>
    <property type="evidence" value="ECO:0000250"/>
    <property type="project" value="UniProtKB"/>
</dbReference>
<dbReference type="GO" id="GO:0050660">
    <property type="term" value="F:flavin adenine dinucleotide binding"/>
    <property type="evidence" value="ECO:0000318"/>
    <property type="project" value="GO_Central"/>
</dbReference>
<dbReference type="GO" id="GO:0006103">
    <property type="term" value="P:2-oxoglutarate metabolic process"/>
    <property type="evidence" value="ECO:0000318"/>
    <property type="project" value="GO_Central"/>
</dbReference>
<dbReference type="GO" id="GO:0006090">
    <property type="term" value="P:pyruvate metabolic process"/>
    <property type="evidence" value="ECO:0000318"/>
    <property type="project" value="GO_Central"/>
</dbReference>
<dbReference type="FunFam" id="3.30.390.30:FF:000001">
    <property type="entry name" value="Dihydrolipoyl dehydrogenase"/>
    <property type="match status" value="1"/>
</dbReference>
<dbReference type="FunFam" id="3.50.50.60:FF:000025">
    <property type="entry name" value="Dihydrolipoyl dehydrogenase"/>
    <property type="match status" value="1"/>
</dbReference>
<dbReference type="FunFam" id="3.50.50.60:FF:000221">
    <property type="entry name" value="Dihydrolipoyl dehydrogenase, mitochondrial"/>
    <property type="match status" value="1"/>
</dbReference>
<dbReference type="Gene3D" id="3.30.390.30">
    <property type="match status" value="1"/>
</dbReference>
<dbReference type="Gene3D" id="3.50.50.60">
    <property type="entry name" value="FAD/NAD(P)-binding domain"/>
    <property type="match status" value="2"/>
</dbReference>
<dbReference type="InterPro" id="IPR050151">
    <property type="entry name" value="Class-I_Pyr_Nuc-Dis_Oxidored"/>
</dbReference>
<dbReference type="InterPro" id="IPR036188">
    <property type="entry name" value="FAD/NAD-bd_sf"/>
</dbReference>
<dbReference type="InterPro" id="IPR023753">
    <property type="entry name" value="FAD/NAD-binding_dom"/>
</dbReference>
<dbReference type="InterPro" id="IPR016156">
    <property type="entry name" value="FAD/NAD-linked_Rdtase_dimer_sf"/>
</dbReference>
<dbReference type="InterPro" id="IPR006258">
    <property type="entry name" value="Lipoamide_DH"/>
</dbReference>
<dbReference type="InterPro" id="IPR001100">
    <property type="entry name" value="Pyr_nuc-diS_OxRdtase"/>
</dbReference>
<dbReference type="InterPro" id="IPR004099">
    <property type="entry name" value="Pyr_nucl-diS_OxRdtase_dimer"/>
</dbReference>
<dbReference type="InterPro" id="IPR012999">
    <property type="entry name" value="Pyr_OxRdtase_I_AS"/>
</dbReference>
<dbReference type="NCBIfam" id="TIGR01350">
    <property type="entry name" value="lipoamide_DH"/>
    <property type="match status" value="1"/>
</dbReference>
<dbReference type="PANTHER" id="PTHR22912:SF151">
    <property type="entry name" value="DIHYDROLIPOYL DEHYDROGENASE, MITOCHONDRIAL"/>
    <property type="match status" value="1"/>
</dbReference>
<dbReference type="PANTHER" id="PTHR22912">
    <property type="entry name" value="DISULFIDE OXIDOREDUCTASE"/>
    <property type="match status" value="1"/>
</dbReference>
<dbReference type="Pfam" id="PF07992">
    <property type="entry name" value="Pyr_redox_2"/>
    <property type="match status" value="1"/>
</dbReference>
<dbReference type="Pfam" id="PF02852">
    <property type="entry name" value="Pyr_redox_dim"/>
    <property type="match status" value="1"/>
</dbReference>
<dbReference type="PIRSF" id="PIRSF000350">
    <property type="entry name" value="Mercury_reductase_MerA"/>
    <property type="match status" value="1"/>
</dbReference>
<dbReference type="PRINTS" id="PR00368">
    <property type="entry name" value="FADPNR"/>
</dbReference>
<dbReference type="PRINTS" id="PR00411">
    <property type="entry name" value="PNDRDTASEI"/>
</dbReference>
<dbReference type="SUPFAM" id="SSF51905">
    <property type="entry name" value="FAD/NAD(P)-binding domain"/>
    <property type="match status" value="1"/>
</dbReference>
<dbReference type="SUPFAM" id="SSF55424">
    <property type="entry name" value="FAD/NAD-linked reductases, dimerisation (C-terminal) domain"/>
    <property type="match status" value="1"/>
</dbReference>
<dbReference type="PROSITE" id="PS00076">
    <property type="entry name" value="PYRIDINE_REDOX_1"/>
    <property type="match status" value="1"/>
</dbReference>
<name>DLDH_PIG</name>
<reference key="1">
    <citation type="journal article" date="1987" name="J. Biol. Chem.">
        <title>Isolation and sequence determination of cDNA clones for porcine and human lipoamide dehydrogenase. Homology to other disulfide oxidoreductases.</title>
        <authorList>
            <person name="Otulakowski G."/>
            <person name="Robinson B.H."/>
        </authorList>
    </citation>
    <scope>NUCLEOTIDE SEQUENCE [MRNA]</scope>
</reference>
<reference key="2">
    <citation type="journal article" date="1982" name="Proc. Natl. Acad. Sci. U.S.A.">
        <title>Amino acid sequence homology between pig heart lipoamide dehydrogenase and human erythrocyte glutathione reductase.</title>
        <authorList>
            <person name="Williams C.H. Jr."/>
            <person name="Arscott L.D."/>
            <person name="Schulz G.E."/>
        </authorList>
    </citation>
    <scope>PROTEIN SEQUENCE OF 36-89; 91-104; 317-331; 346-360; 388-417 AND 450-482</scope>
    <source>
        <tissue>Heart</tissue>
    </source>
</reference>
<reference key="3">
    <citation type="journal article" date="2007" name="Proc. Natl. Acad. Sci. U.S.A.">
        <title>Cryptic proteolytic activity of dihydrolipoamide dehydrogenase.</title>
        <authorList>
            <person name="Babady N.E."/>
            <person name="Pang Y.P."/>
            <person name="Elpeleg O."/>
            <person name="Isaya G."/>
        </authorList>
    </citation>
    <scope>FUNCTION</scope>
    <scope>TISSUE SPECIFICITY</scope>
</reference>
<sequence>MQSWSRVYCTLAKRGHFNRIAHGLQGVSAVPLRTYADQPIDADVTVIGSGPGGYVAAIKAAQLGFKTVCIEKNETLGGTCLNVGCIPSKALLNNSHYYHMAHGKDFASRGIEMSEVRLNLEKMMEQKSNAVKALTGGIAHLFKQNKVVRVNGYGKITGKNQVTATKADGSTEVINTKNILIATGSEVTPFPGITIDEDTVVSSTGALSLKKVPEKMVVIGAGVIGVELGSVWQRLGADVTAVELLGHVGGIGIDMEVSKNFQRILQKQGFKFKLNTKVIGATKKSDGNIDVSIEAASGGKAEVITCDVLLVCIGRRPFTQNLGLEELGIELDPRGRIPVNTRFQTKIPNIYAIGDVVAGPMLAHKAEDEGIICVEGMAGGAVHIDYNCVPSVIYTHPEVAWVGKSEEQLKEEGIEYKVGKFPFAANSRAKTNADTDGMVKILGQKSTDRVLGAHIIGPGAGEMINEAALALEYGASCEDIARVCHAHPTLSEAFREANLAASFGKAINF</sequence>
<organism>
    <name type="scientific">Sus scrofa</name>
    <name type="common">Pig</name>
    <dbReference type="NCBI Taxonomy" id="9823"/>
    <lineage>
        <taxon>Eukaryota</taxon>
        <taxon>Metazoa</taxon>
        <taxon>Chordata</taxon>
        <taxon>Craniata</taxon>
        <taxon>Vertebrata</taxon>
        <taxon>Euteleostomi</taxon>
        <taxon>Mammalia</taxon>
        <taxon>Eutheria</taxon>
        <taxon>Laurasiatheria</taxon>
        <taxon>Artiodactyla</taxon>
        <taxon>Suina</taxon>
        <taxon>Suidae</taxon>
        <taxon>Sus</taxon>
    </lineage>
</organism>
<protein>
    <recommendedName>
        <fullName>Dihydrolipoyl dehydrogenase, mitochondrial</fullName>
        <ecNumber evidence="2">1.8.1.4</ecNumber>
    </recommendedName>
    <alternativeName>
        <fullName>Dihydrolipoamide dehydrogenase</fullName>
    </alternativeName>
</protein>